<sequence>MAAHDDDMNRGIRPGRGSDDPSGQIAYLEQEIAVLRRKLADSPRHTRILEERIVELQTNLAGVSAQNERLANTLREARDQIVALKEEVDRLAQPPAGFGVFLTANEDGTADIFTGGRKLRVNVSPSVDLEELRRGQEVMLNEALNVVEAMEYESVGDIVTLKEILEDGERALVQGHTDEERVVRLAEPLLDITIRPGDALLLEPRSGYVYEVVPKSEVEELVLEEVPDIGYEQIGGLGNQIEMIRDAVELPYLYPDLFKEHELRPPKGVLLYGPPGCGKTLIAKAVANSLAKKVAEVTGQAQGKSFFLNIKGPELLNKYVGETERQIRLVFQRAREKASEGTPVIVFFDEMESLFRTRGSGVSSDVENTIVPQLLAEIDGVEGLQNVVVIGASNREDMIDPAILRPGRLDVKIKIERPDAEAAKDIFQKYLTERLPLHTDDLGEHGGSKATTVQSMIQTAVEHMYAESEENRFLEVTYANGDKEVLYFKDFNSGAMIENIVGRAKKMAIKDFLDKNQKGLRVSHLLQACVDEFKENEDLPNTTNPDDWARISGKKGERIVYIRTLITGKQGADTGRSIDTVANTGQYL</sequence>
<keyword id="KW-0067">ATP-binding</keyword>
<keyword id="KW-0143">Chaperone</keyword>
<keyword id="KW-0175">Coiled coil</keyword>
<keyword id="KW-0547">Nucleotide-binding</keyword>
<keyword id="KW-0647">Proteasome</keyword>
<keyword id="KW-1185">Reference proteome</keyword>
<feature type="chain" id="PRO_0000397025" description="Proteasome-associated ATPase">
    <location>
        <begin position="1"/>
        <end position="588"/>
    </location>
</feature>
<feature type="region of interest" description="Disordered" evidence="2">
    <location>
        <begin position="1"/>
        <end position="23"/>
    </location>
</feature>
<feature type="region of interest" description="Docks into pockets in the proteasome alpha-ring" evidence="1">
    <location>
        <begin position="587"/>
        <end position="588"/>
    </location>
</feature>
<feature type="coiled-coil region" evidence="1">
    <location>
        <begin position="47"/>
        <end position="94"/>
    </location>
</feature>
<feature type="compositionally biased region" description="Basic and acidic residues" evidence="2">
    <location>
        <begin position="1"/>
        <end position="10"/>
    </location>
</feature>
<feature type="binding site" evidence="1">
    <location>
        <begin position="276"/>
        <end position="281"/>
    </location>
    <ligand>
        <name>ATP</name>
        <dbReference type="ChEBI" id="CHEBI:30616"/>
    </ligand>
</feature>
<comment type="function">
    <text evidence="1">ATPase which is responsible for recognizing, binding, unfolding and translocation of pupylated proteins into the bacterial 20S proteasome core particle. May be essential for opening the gate of the 20S proteasome via an interaction with its C-terminus, thereby allowing substrate entry and access to the site of proteolysis. Thus, the C-termini of the proteasomal ATPase may function like a 'key in a lock' to induce gate opening and therefore regulate proteolysis.</text>
</comment>
<comment type="pathway">
    <text evidence="1">Protein degradation; proteasomal Pup-dependent pathway.</text>
</comment>
<comment type="subunit">
    <text evidence="1">Homohexamer. Assembles into a hexameric ring structure that caps the 20S proteasome core. Strongly interacts with the prokaryotic ubiquitin-like protein Pup through a hydrophobic interface; the interacting region of ARC lies in its N-terminal coiled-coil domain. There is one Pup binding site per ARC hexamer ring. Upon ATP-binding, the C-terminus of ARC interacts with the alpha-rings of the proteasome core, possibly by binding to the intersubunit pockets.</text>
</comment>
<comment type="domain">
    <text evidence="1">Consists of three main regions, an N-terminal coiled-coil domain that binds to protein Pup and functions as a docking station, an interdomain involved in ARC hexamerization, and a C-terminal ATPase domain of the AAA type.</text>
</comment>
<comment type="similarity">
    <text evidence="1">Belongs to the AAA ATPase family.</text>
</comment>
<comment type="sequence caution" evidence="3">
    <conflict type="erroneous initiation">
        <sequence resource="EMBL-CDS" id="CBG74328"/>
    </conflict>
    <text>Extended N-terminus.</text>
</comment>
<evidence type="ECO:0000255" key="1">
    <source>
        <dbReference type="HAMAP-Rule" id="MF_02112"/>
    </source>
</evidence>
<evidence type="ECO:0000256" key="2">
    <source>
        <dbReference type="SAM" id="MobiDB-lite"/>
    </source>
</evidence>
<evidence type="ECO:0000305" key="3"/>
<reference key="1">
    <citation type="journal article" date="2010" name="Mol. Plant Microbe Interact.">
        <title>Streptomyces scabies 87-22 contains a coronafacic acid-like biosynthetic cluster that contributes to plant-microbe interactions.</title>
        <authorList>
            <person name="Bignell D.R."/>
            <person name="Seipke R.F."/>
            <person name="Huguet-Tapia J.C."/>
            <person name="Chambers A.H."/>
            <person name="Parry R.J."/>
            <person name="Loria R."/>
        </authorList>
    </citation>
    <scope>NUCLEOTIDE SEQUENCE [LARGE SCALE GENOMIC DNA]</scope>
    <source>
        <strain>87.22</strain>
    </source>
</reference>
<gene>
    <name evidence="1" type="primary">arc</name>
    <name type="ordered locus">SCAB_73441</name>
</gene>
<dbReference type="EMBL" id="FN554889">
    <property type="protein sequence ID" value="CBG74328.1"/>
    <property type="status" value="ALT_INIT"/>
    <property type="molecule type" value="Genomic_DNA"/>
</dbReference>
<dbReference type="RefSeq" id="WP_037725761.1">
    <property type="nucleotide sequence ID" value="NC_013929.1"/>
</dbReference>
<dbReference type="SMR" id="C9Z319"/>
<dbReference type="STRING" id="680198.SCAB_73441"/>
<dbReference type="GeneID" id="24306444"/>
<dbReference type="KEGG" id="scb:SCAB_73441"/>
<dbReference type="eggNOG" id="COG1222">
    <property type="taxonomic scope" value="Bacteria"/>
</dbReference>
<dbReference type="HOGENOM" id="CLU_036054_0_0_11"/>
<dbReference type="UniPathway" id="UPA00997"/>
<dbReference type="Proteomes" id="UP000001444">
    <property type="component" value="Chromosome"/>
</dbReference>
<dbReference type="GO" id="GO:0000502">
    <property type="term" value="C:proteasome complex"/>
    <property type="evidence" value="ECO:0007669"/>
    <property type="project" value="UniProtKB-KW"/>
</dbReference>
<dbReference type="GO" id="GO:0005524">
    <property type="term" value="F:ATP binding"/>
    <property type="evidence" value="ECO:0007669"/>
    <property type="project" value="UniProtKB-UniRule"/>
</dbReference>
<dbReference type="GO" id="GO:0016887">
    <property type="term" value="F:ATP hydrolysis activity"/>
    <property type="evidence" value="ECO:0007669"/>
    <property type="project" value="UniProtKB-UniRule"/>
</dbReference>
<dbReference type="GO" id="GO:0019941">
    <property type="term" value="P:modification-dependent protein catabolic process"/>
    <property type="evidence" value="ECO:0007669"/>
    <property type="project" value="InterPro"/>
</dbReference>
<dbReference type="GO" id="GO:0010498">
    <property type="term" value="P:proteasomal protein catabolic process"/>
    <property type="evidence" value="ECO:0007669"/>
    <property type="project" value="InterPro"/>
</dbReference>
<dbReference type="FunFam" id="1.20.5.170:FF:000018">
    <property type="entry name" value="AAA ATPase forming ring-shaped complexes"/>
    <property type="match status" value="1"/>
</dbReference>
<dbReference type="FunFam" id="2.40.50.140:FF:000109">
    <property type="entry name" value="AAA ATPase forming ring-shaped complexes"/>
    <property type="match status" value="1"/>
</dbReference>
<dbReference type="FunFam" id="3.40.50.300:FF:000155">
    <property type="entry name" value="AAA ATPase forming ring-shaped complexes"/>
    <property type="match status" value="1"/>
</dbReference>
<dbReference type="Gene3D" id="1.10.8.60">
    <property type="match status" value="1"/>
</dbReference>
<dbReference type="Gene3D" id="1.20.5.170">
    <property type="match status" value="1"/>
</dbReference>
<dbReference type="Gene3D" id="2.40.50.140">
    <property type="entry name" value="Nucleic acid-binding proteins"/>
    <property type="match status" value="2"/>
</dbReference>
<dbReference type="Gene3D" id="3.40.50.300">
    <property type="entry name" value="P-loop containing nucleotide triphosphate hydrolases"/>
    <property type="match status" value="1"/>
</dbReference>
<dbReference type="HAMAP" id="MF_02112">
    <property type="entry name" value="ARC_ATPase"/>
    <property type="match status" value="1"/>
</dbReference>
<dbReference type="InterPro" id="IPR003593">
    <property type="entry name" value="AAA+_ATPase"/>
</dbReference>
<dbReference type="InterPro" id="IPR050168">
    <property type="entry name" value="AAA_ATPase_domain"/>
</dbReference>
<dbReference type="InterPro" id="IPR003959">
    <property type="entry name" value="ATPase_AAA_core"/>
</dbReference>
<dbReference type="InterPro" id="IPR003960">
    <property type="entry name" value="ATPase_AAA_CS"/>
</dbReference>
<dbReference type="InterPro" id="IPR012340">
    <property type="entry name" value="NA-bd_OB-fold"/>
</dbReference>
<dbReference type="InterPro" id="IPR027417">
    <property type="entry name" value="P-loop_NTPase"/>
</dbReference>
<dbReference type="InterPro" id="IPR032501">
    <property type="entry name" value="Prot_ATP_ID_OB_2nd"/>
</dbReference>
<dbReference type="InterPro" id="IPR041626">
    <property type="entry name" value="Prot_ATP_ID_OB_N"/>
</dbReference>
<dbReference type="InterPro" id="IPR022482">
    <property type="entry name" value="Proteasome_ATPase"/>
</dbReference>
<dbReference type="NCBIfam" id="TIGR03689">
    <property type="entry name" value="pup_AAA"/>
    <property type="match status" value="1"/>
</dbReference>
<dbReference type="PANTHER" id="PTHR23077">
    <property type="entry name" value="AAA-FAMILY ATPASE"/>
    <property type="match status" value="1"/>
</dbReference>
<dbReference type="PANTHER" id="PTHR23077:SF144">
    <property type="entry name" value="PROTEASOME-ASSOCIATED ATPASE"/>
    <property type="match status" value="1"/>
</dbReference>
<dbReference type="Pfam" id="PF00004">
    <property type="entry name" value="AAA"/>
    <property type="match status" value="1"/>
</dbReference>
<dbReference type="Pfam" id="PF16450">
    <property type="entry name" value="Prot_ATP_ID_OB_C"/>
    <property type="match status" value="1"/>
</dbReference>
<dbReference type="Pfam" id="PF17758">
    <property type="entry name" value="Prot_ATP_ID_OB_N"/>
    <property type="match status" value="1"/>
</dbReference>
<dbReference type="SMART" id="SM00382">
    <property type="entry name" value="AAA"/>
    <property type="match status" value="1"/>
</dbReference>
<dbReference type="SUPFAM" id="SSF52540">
    <property type="entry name" value="P-loop containing nucleoside triphosphate hydrolases"/>
    <property type="match status" value="1"/>
</dbReference>
<dbReference type="PROSITE" id="PS00674">
    <property type="entry name" value="AAA"/>
    <property type="match status" value="1"/>
</dbReference>
<organism>
    <name type="scientific">Streptomyces scabiei (strain 87.22)</name>
    <dbReference type="NCBI Taxonomy" id="680198"/>
    <lineage>
        <taxon>Bacteria</taxon>
        <taxon>Bacillati</taxon>
        <taxon>Actinomycetota</taxon>
        <taxon>Actinomycetes</taxon>
        <taxon>Kitasatosporales</taxon>
        <taxon>Streptomycetaceae</taxon>
        <taxon>Streptomyces</taxon>
    </lineage>
</organism>
<proteinExistence type="inferred from homology"/>
<accession>C9Z319</accession>
<name>ARC_STRSW</name>
<protein>
    <recommendedName>
        <fullName evidence="1">Proteasome-associated ATPase</fullName>
    </recommendedName>
    <alternativeName>
        <fullName evidence="1">AAA ATPase forming ring-shaped complexes</fullName>
        <shortName evidence="1">ARC</shortName>
    </alternativeName>
    <alternativeName>
        <fullName evidence="1">Proteasomal ATPase</fullName>
    </alternativeName>
</protein>